<protein>
    <recommendedName>
        <fullName>Mating-type protein A-1</fullName>
        <shortName>Mt A-1</shortName>
    </recommendedName>
</protein>
<comment type="function">
    <text evidence="2 3">Mating type proteins are sequence specific DNA-binding proteins that act as master switches in yeast differentiation by controlling gene expression in a cell type-specific fashion. Transcriptional activator that induces the transcription of A-specific genes like mating factor ccg-4. Required for mating as an A-cell and for blocking of heterokaryon formation (vegetative incompatibility).</text>
</comment>
<comment type="subcellular location">
    <subcellularLocation>
        <location evidence="1">Nucleus</location>
    </subcellularLocation>
</comment>
<comment type="developmental stage">
    <text evidence="3">Only present in A-cells and in a/A diploid cells.</text>
</comment>
<comment type="similarity">
    <text evidence="1">Belongs to the MATALPHA1 family.</text>
</comment>
<comment type="caution">
    <text evidence="4">Do not confuse Mt a-1 with MT A-1; these are two different proteins.</text>
</comment>
<name>MATA_NEUCR</name>
<feature type="chain" id="PRO_0000206019" description="Mating-type protein A-1">
    <location>
        <begin position="1"/>
        <end position="293"/>
    </location>
</feature>
<feature type="DNA-binding region" description="Alpha box" evidence="1">
    <location>
        <begin position="42"/>
        <end position="97"/>
    </location>
</feature>
<reference key="1">
    <citation type="journal article" date="1990" name="Proc. Natl. Acad. Sci. U.S.A.">
        <title>Neurospora crassa A mating-type region.</title>
        <authorList>
            <person name="Glass N.L."/>
            <person name="Grotelueschen J."/>
            <person name="Metzenberg R.L."/>
        </authorList>
    </citation>
    <scope>NUCLEOTIDE SEQUENCE [GENOMIC DNA]</scope>
    <source>
        <strain>ATCC 24698 / 74-OR23-1A / CBS 708.71 / DSM 1257 / FGSC 987</strain>
    </source>
</reference>
<reference key="2">
    <citation type="journal article" date="1996" name="Mol. Gen. Genet.">
        <title>Transcriptional analysis of the mtA idiomorph of Neurospora crassa identifies two genes in addition to mtA-1.</title>
        <authorList>
            <person name="Ferreira A.V.-B."/>
            <person name="Saupe S."/>
            <person name="Glass N.L."/>
        </authorList>
    </citation>
    <scope>SEQUENCE REVISION</scope>
</reference>
<reference key="3">
    <citation type="journal article" date="2003" name="Nature">
        <title>The genome sequence of the filamentous fungus Neurospora crassa.</title>
        <authorList>
            <person name="Galagan J.E."/>
            <person name="Calvo S.E."/>
            <person name="Borkovich K.A."/>
            <person name="Selker E.U."/>
            <person name="Read N.D."/>
            <person name="Jaffe D.B."/>
            <person name="FitzHugh W."/>
            <person name="Ma L.-J."/>
            <person name="Smirnov S."/>
            <person name="Purcell S."/>
            <person name="Rehman B."/>
            <person name="Elkins T."/>
            <person name="Engels R."/>
            <person name="Wang S."/>
            <person name="Nielsen C.B."/>
            <person name="Butler J."/>
            <person name="Endrizzi M."/>
            <person name="Qui D."/>
            <person name="Ianakiev P."/>
            <person name="Bell-Pedersen D."/>
            <person name="Nelson M.A."/>
            <person name="Werner-Washburne M."/>
            <person name="Selitrennikoff C.P."/>
            <person name="Kinsey J.A."/>
            <person name="Braun E.L."/>
            <person name="Zelter A."/>
            <person name="Schulte U."/>
            <person name="Kothe G.O."/>
            <person name="Jedd G."/>
            <person name="Mewes H.-W."/>
            <person name="Staben C."/>
            <person name="Marcotte E."/>
            <person name="Greenberg D."/>
            <person name="Roy A."/>
            <person name="Foley K."/>
            <person name="Naylor J."/>
            <person name="Stange-Thomann N."/>
            <person name="Barrett R."/>
            <person name="Gnerre S."/>
            <person name="Kamal M."/>
            <person name="Kamvysselis M."/>
            <person name="Mauceli E.W."/>
            <person name="Bielke C."/>
            <person name="Rudd S."/>
            <person name="Frishman D."/>
            <person name="Krystofova S."/>
            <person name="Rasmussen C."/>
            <person name="Metzenberg R.L."/>
            <person name="Perkins D.D."/>
            <person name="Kroken S."/>
            <person name="Cogoni C."/>
            <person name="Macino G."/>
            <person name="Catcheside D.E.A."/>
            <person name="Li W."/>
            <person name="Pratt R.J."/>
            <person name="Osmani S.A."/>
            <person name="DeSouza C.P.C."/>
            <person name="Glass N.L."/>
            <person name="Orbach M.J."/>
            <person name="Berglund J.A."/>
            <person name="Voelker R."/>
            <person name="Yarden O."/>
            <person name="Plamann M."/>
            <person name="Seiler S."/>
            <person name="Dunlap J.C."/>
            <person name="Radford A."/>
            <person name="Aramayo R."/>
            <person name="Natvig D.O."/>
            <person name="Alex L.A."/>
            <person name="Mannhaupt G."/>
            <person name="Ebbole D.J."/>
            <person name="Freitag M."/>
            <person name="Paulsen I."/>
            <person name="Sachs M.S."/>
            <person name="Lander E.S."/>
            <person name="Nusbaum C."/>
            <person name="Birren B.W."/>
        </authorList>
    </citation>
    <scope>NUCLEOTIDE SEQUENCE [LARGE SCALE GENOMIC DNA]</scope>
    <source>
        <strain>ATCC 24698 / 74-OR23-1A / CBS 708.71 / DSM 1257 / FGSC 987</strain>
    </source>
</reference>
<reference key="4">
    <citation type="journal article" date="1996" name="Mol. Gen. Genet.">
        <title>The molecular nature of mutations in the mt A-1 gene of the Neurospora crassa A idiomorph and their relation to mating-type function.</title>
        <authorList>
            <person name="Saupe S."/>
            <person name="Stenberg L."/>
            <person name="Shiu K.T."/>
            <person name="Griffiths A.J.F."/>
            <person name="Glass N.L."/>
        </authorList>
    </citation>
    <scope>FUNCTION</scope>
    <scope>DEVELOPMENTAL STAGE</scope>
</reference>
<reference key="5">
    <citation type="journal article" date="2002" name="Mol. Microbiol.">
        <title>The Neurospora crassa pheromone precursor genes are regulated by the mating type locus and the circadian clock.</title>
        <authorList>
            <person name="Bobrowicz P."/>
            <person name="Pawlak R."/>
            <person name="Correa A."/>
            <person name="Bell-Pedersen D."/>
            <person name="Ebbole D.J."/>
        </authorList>
    </citation>
    <scope>FUNCTION IN TRANSCRIPTIONAL ACTIVATION</scope>
</reference>
<keyword id="KW-0238">DNA-binding</keyword>
<keyword id="KW-0539">Nucleus</keyword>
<keyword id="KW-1185">Reference proteome</keyword>
<keyword id="KW-0804">Transcription</keyword>
<keyword id="KW-0805">Transcription regulation</keyword>
<gene>
    <name type="primary">mtA-1</name>
    <name type="synonym">matA-1</name>
    <name type="ORF">NCU01958</name>
</gene>
<sequence length="293" mass="33179">MSGVDQIVKTFADLAEDDREAAMRAFSRMMRRGTEPVRRIPAAKKKVNGFMGFRSYYSPLFSQLPQKERSPFMTILWQHDPFHNEWDFMCSVYSSIRTYLEQEKVTLQLWIHYAVGHLGVIIRDNYMASFGWNLVRFPNGTHDLERTALPLVQHNLQPMNGLCLLTKCLESGLPLANPHSVIAKLSDPSYDMIWFNKRPHRQQGHAVQTDESEVGVSAMFPRNHTVAAEVDGIINLPLSHWIQQGEFGTESGYSAQFETLLDSILENGHASSNDPYNMALAIDVPMMGFNGGA</sequence>
<dbReference type="EMBL" id="M33876">
    <property type="protein sequence ID" value="AAC37478.1"/>
    <property type="molecule type" value="Genomic_DNA"/>
</dbReference>
<dbReference type="EMBL" id="CM002236">
    <property type="protein sequence ID" value="ESA43845.1"/>
    <property type="molecule type" value="Genomic_DNA"/>
</dbReference>
<dbReference type="PIR" id="S65582">
    <property type="entry name" value="S65582"/>
</dbReference>
<dbReference type="RefSeq" id="XP_011392909.1">
    <property type="nucleotide sequence ID" value="XM_011394607.1"/>
</dbReference>
<dbReference type="STRING" id="367110.P19392"/>
<dbReference type="PaxDb" id="5141-EFNCRP00000001088"/>
<dbReference type="EnsemblFungi" id="ESA43845">
    <property type="protein sequence ID" value="ESA43845"/>
    <property type="gene ID" value="NCU01958"/>
</dbReference>
<dbReference type="GeneID" id="3880391"/>
<dbReference type="KEGG" id="ncr:NCU01958"/>
<dbReference type="VEuPathDB" id="FungiDB:NCU01958"/>
<dbReference type="HOGENOM" id="CLU_080756_0_0_1"/>
<dbReference type="InParanoid" id="P19392"/>
<dbReference type="OrthoDB" id="5398665at2759"/>
<dbReference type="Proteomes" id="UP000001805">
    <property type="component" value="Chromosome 1, Linkage Group I"/>
</dbReference>
<dbReference type="GO" id="GO:0005634">
    <property type="term" value="C:nucleus"/>
    <property type="evidence" value="ECO:0007669"/>
    <property type="project" value="UniProtKB-SubCell"/>
</dbReference>
<dbReference type="GO" id="GO:0008301">
    <property type="term" value="F:DNA binding, bending"/>
    <property type="evidence" value="ECO:0007669"/>
    <property type="project" value="InterPro"/>
</dbReference>
<dbReference type="GO" id="GO:0045895">
    <property type="term" value="P:positive regulation of mating-type specific transcription, DNA-templated"/>
    <property type="evidence" value="ECO:0007669"/>
    <property type="project" value="InterPro"/>
</dbReference>
<dbReference type="InterPro" id="IPR006856">
    <property type="entry name" value="MATalpha_HMGbox"/>
</dbReference>
<dbReference type="Pfam" id="PF04769">
    <property type="entry name" value="MATalpha_HMGbox"/>
    <property type="match status" value="1"/>
</dbReference>
<dbReference type="PROSITE" id="PS51325">
    <property type="entry name" value="ALPHA_BOX"/>
    <property type="match status" value="1"/>
</dbReference>
<organism>
    <name type="scientific">Neurospora crassa (strain ATCC 24698 / 74-OR23-1A / CBS 708.71 / DSM 1257 / FGSC 987)</name>
    <dbReference type="NCBI Taxonomy" id="367110"/>
    <lineage>
        <taxon>Eukaryota</taxon>
        <taxon>Fungi</taxon>
        <taxon>Dikarya</taxon>
        <taxon>Ascomycota</taxon>
        <taxon>Pezizomycotina</taxon>
        <taxon>Sordariomycetes</taxon>
        <taxon>Sordariomycetidae</taxon>
        <taxon>Sordariales</taxon>
        <taxon>Sordariaceae</taxon>
        <taxon>Neurospora</taxon>
    </lineage>
</organism>
<accession>P19392</accession>
<accession>Q7RVK1</accession>
<accession>V5IQ53</accession>
<proteinExistence type="evidence at protein level"/>
<evidence type="ECO:0000255" key="1">
    <source>
        <dbReference type="PROSITE-ProRule" id="PRU00655"/>
    </source>
</evidence>
<evidence type="ECO:0000269" key="2">
    <source>
    </source>
</evidence>
<evidence type="ECO:0000269" key="3">
    <source>
    </source>
</evidence>
<evidence type="ECO:0000305" key="4"/>